<gene>
    <name evidence="7" type="primary">cbpD</name>
    <name evidence="8" type="synonym">lasD</name>
    <name type="ordered locus">PA0852</name>
</gene>
<evidence type="ECO:0000255" key="1"/>
<evidence type="ECO:0000269" key="2">
    <source>
    </source>
</evidence>
<evidence type="ECO:0000269" key="3">
    <source>
    </source>
</evidence>
<evidence type="ECO:0000269" key="4">
    <source>
    </source>
</evidence>
<evidence type="ECO:0000269" key="5">
    <source>
    </source>
</evidence>
<evidence type="ECO:0000269" key="6">
    <source>
    </source>
</evidence>
<evidence type="ECO:0000303" key="7">
    <source>
    </source>
</evidence>
<evidence type="ECO:0000303" key="8">
    <source>
    </source>
</evidence>
<evidence type="ECO:0000305" key="9"/>
<evidence type="ECO:0007829" key="10">
    <source>
        <dbReference type="PDB" id="7SQX"/>
    </source>
</evidence>
<dbReference type="EMBL" id="AF196565">
    <property type="protein sequence ID" value="AAF12807.1"/>
    <property type="molecule type" value="Genomic_DNA"/>
</dbReference>
<dbReference type="EMBL" id="AE004091">
    <property type="protein sequence ID" value="AAG04241.1"/>
    <property type="molecule type" value="Genomic_DNA"/>
</dbReference>
<dbReference type="PIR" id="F83538">
    <property type="entry name" value="F83538"/>
</dbReference>
<dbReference type="PIR" id="S67918">
    <property type="entry name" value="S67918"/>
</dbReference>
<dbReference type="RefSeq" id="NP_249543.1">
    <property type="nucleotide sequence ID" value="NC_002516.2"/>
</dbReference>
<dbReference type="RefSeq" id="WP_003114231.1">
    <property type="nucleotide sequence ID" value="NZ_QZGE01000007.1"/>
</dbReference>
<dbReference type="PDB" id="7SQX">
    <property type="method" value="X-ray"/>
    <property type="resolution" value="3.00 A"/>
    <property type="chains" value="A=26-389"/>
</dbReference>
<dbReference type="PDBsum" id="7SQX"/>
<dbReference type="SASBDB" id="Q9I589"/>
<dbReference type="SMR" id="Q9I589"/>
<dbReference type="STRING" id="208964.PA0852"/>
<dbReference type="CAZy" id="AA10">
    <property type="family name" value="Auxiliary Activities 10"/>
</dbReference>
<dbReference type="CAZy" id="CBM73">
    <property type="family name" value="Carbohydrate-Binding Module Family 73"/>
</dbReference>
<dbReference type="PaxDb" id="208964-PA0852"/>
<dbReference type="GeneID" id="877771"/>
<dbReference type="KEGG" id="pae:PA0852"/>
<dbReference type="PATRIC" id="fig|208964.12.peg.884"/>
<dbReference type="PseudoCAP" id="PA0852"/>
<dbReference type="HOGENOM" id="CLU_039396_2_0_6"/>
<dbReference type="InParanoid" id="Q9I589"/>
<dbReference type="OrthoDB" id="3675244at2"/>
<dbReference type="BioCyc" id="PAER208964:G1FZ6-867-MONOMER"/>
<dbReference type="PHI-base" id="PHI:11182"/>
<dbReference type="Proteomes" id="UP000002438">
    <property type="component" value="Chromosome"/>
</dbReference>
<dbReference type="GO" id="GO:0005615">
    <property type="term" value="C:extracellular space"/>
    <property type="evidence" value="ECO:0000314"/>
    <property type="project" value="PseudoCAP"/>
</dbReference>
<dbReference type="GO" id="GO:0008061">
    <property type="term" value="F:chitin binding"/>
    <property type="evidence" value="ECO:0000314"/>
    <property type="project" value="PseudoCAP"/>
</dbReference>
<dbReference type="GO" id="GO:0015628">
    <property type="term" value="P:protein secretion by the type II secretion system"/>
    <property type="evidence" value="ECO:0000314"/>
    <property type="project" value="PseudoCAP"/>
</dbReference>
<dbReference type="GO" id="GO:0043952">
    <property type="term" value="P:protein transport by the Sec complex"/>
    <property type="evidence" value="ECO:0000314"/>
    <property type="project" value="PseudoCAP"/>
</dbReference>
<dbReference type="CDD" id="cd21177">
    <property type="entry name" value="LPMO_AA10"/>
    <property type="match status" value="1"/>
</dbReference>
<dbReference type="Gene3D" id="3.30.70.2150">
    <property type="match status" value="1"/>
</dbReference>
<dbReference type="Gene3D" id="2.70.50.50">
    <property type="entry name" value="chitin-binding protein cbp21"/>
    <property type="match status" value="1"/>
</dbReference>
<dbReference type="InterPro" id="IPR004302">
    <property type="entry name" value="Cellulose/chitin-bd_N"/>
</dbReference>
<dbReference type="InterPro" id="IPR041029">
    <property type="entry name" value="GbpA_2"/>
</dbReference>
<dbReference type="InterPro" id="IPR051024">
    <property type="entry name" value="GlcNAc_Chitin_IntDeg"/>
</dbReference>
<dbReference type="InterPro" id="IPR014756">
    <property type="entry name" value="Ig_E-set"/>
</dbReference>
<dbReference type="PANTHER" id="PTHR34823:SF1">
    <property type="entry name" value="CHITIN-BINDING TYPE-4 DOMAIN-CONTAINING PROTEIN"/>
    <property type="match status" value="1"/>
</dbReference>
<dbReference type="PANTHER" id="PTHR34823">
    <property type="entry name" value="GLCNAC-BINDING PROTEIN A"/>
    <property type="match status" value="1"/>
</dbReference>
<dbReference type="Pfam" id="PF18416">
    <property type="entry name" value="GbpA_2"/>
    <property type="match status" value="1"/>
</dbReference>
<dbReference type="Pfam" id="PF03067">
    <property type="entry name" value="LPMO_10"/>
    <property type="match status" value="1"/>
</dbReference>
<dbReference type="SUPFAM" id="SSF81296">
    <property type="entry name" value="E set domains"/>
    <property type="match status" value="1"/>
</dbReference>
<accession>Q9I589</accession>
<accession>Q9RMI4</accession>
<keyword id="KW-0002">3D-structure</keyword>
<keyword id="KW-0147">Chitin-binding</keyword>
<keyword id="KW-0903">Direct protein sequencing</keyword>
<keyword id="KW-1185">Reference proteome</keyword>
<keyword id="KW-0964">Secreted</keyword>
<keyword id="KW-0732">Signal</keyword>
<comment type="function">
    <text evidence="2">Binds chitin but does not hydrolyze it, has no detectable protease or staphylolytic activity.</text>
</comment>
<comment type="subcellular location">
    <subcellularLocation>
        <location evidence="2 5">Secreted</location>
    </subcellularLocation>
    <text evidence="2 5">Secreted in an Xcp-dependent fashion (a type II secretion pathway).</text>
</comment>
<comment type="PTM">
    <text evidence="2 5 9">Can be detected in the extracellular supernatant as a 43 kDa protein and a 23 kDa protein, both proteins have the same N-terminus (PubMed:10671445, PubMed:9642203). Only the larger protein binds chitin, which may protect it from further processing and/or degradation by elastase (lasB) (PubMed:10671445, PubMed:9642203). It is not clear whether the short form is functional or a degradation product.</text>
</comment>
<comment type="disruption phenotype">
    <text evidence="2 3">Decreases chitin-binding, has no visible effect on extracellular staphylolytic or protease activity (PubMed:10671445). Decreased association with the hyphae form of C.albicans strain SC5314; P.aeruginosa does not adhere to yeast form C.albicans (PubMed:23509956).</text>
</comment>
<comment type="caution">
    <text evidence="4 6">Was originally thought to be a protease that processes pro-LasA.</text>
</comment>
<proteinExistence type="evidence at protein level"/>
<reference key="1">
    <citation type="journal article" date="2000" name="J. Bacteriol.">
        <title>Identification of a chitin-binding protein secreted by Pseudomonas aeruginosa.</title>
        <authorList>
            <person name="Folders J."/>
            <person name="Tommassen J."/>
            <person name="van Loon L.C."/>
            <person name="Bitter W."/>
        </authorList>
    </citation>
    <scope>NUCLEOTIDE SEQUENCE [GENOMIC DNA]</scope>
    <scope>FUNCTION</scope>
    <scope>SUBCELLULAR LOCATION</scope>
    <scope>PROTEOLYTIC CLEAVAGE</scope>
    <scope>DISRUPTION PHENOTYPE</scope>
    <source>
        <strain>PAO1 / PAO25</strain>
    </source>
</reference>
<reference key="2">
    <citation type="journal article" date="2000" name="Nature">
        <title>Complete genome sequence of Pseudomonas aeruginosa PAO1, an opportunistic pathogen.</title>
        <authorList>
            <person name="Stover C.K."/>
            <person name="Pham X.-Q.T."/>
            <person name="Erwin A.L."/>
            <person name="Mizoguchi S.D."/>
            <person name="Warrener P."/>
            <person name="Hickey M.J."/>
            <person name="Brinkman F.S.L."/>
            <person name="Hufnagle W.O."/>
            <person name="Kowalik D.J."/>
            <person name="Lagrou M."/>
            <person name="Garber R.L."/>
            <person name="Goltry L."/>
            <person name="Tolentino E."/>
            <person name="Westbrock-Wadman S."/>
            <person name="Yuan Y."/>
            <person name="Brody L.L."/>
            <person name="Coulter S.N."/>
            <person name="Folger K.R."/>
            <person name="Kas A."/>
            <person name="Larbig K."/>
            <person name="Lim R.M."/>
            <person name="Smith K.A."/>
            <person name="Spencer D.H."/>
            <person name="Wong G.K.-S."/>
            <person name="Wu Z."/>
            <person name="Paulsen I.T."/>
            <person name="Reizer J."/>
            <person name="Saier M.H. Jr."/>
            <person name="Hancock R.E.W."/>
            <person name="Lory S."/>
            <person name="Olson M.V."/>
        </authorList>
    </citation>
    <scope>NUCLEOTIDE SEQUENCE [LARGE SCALE GENOMIC DNA]</scope>
    <source>
        <strain>ATCC 15692 / DSM 22644 / CIP 104116 / JCM 14847 / LMG 12228 / 1C / PRS 101 / PAO1</strain>
    </source>
</reference>
<reference key="3">
    <citation type="journal article" date="1995" name="Mol. Microbiol.">
        <title>Purification and characterization of LasD: a second staphylolytic proteinase produced by Pseudomonas aeruginosa.</title>
        <authorList>
            <person name="Park S."/>
            <person name="Galloway D.R."/>
        </authorList>
    </citation>
    <scope>PROTEIN SEQUENCE OF 26-40</scope>
    <scope>INCORRECT FUNCTION</scope>
</reference>
<reference key="4">
    <citation type="journal article" date="1998" name="J. Bacteriol.">
        <title>Secretion of elastinolytic enzymes and their propeptides by Pseudomonas aeruginosa.</title>
        <authorList>
            <person name="Braun P."/>
            <person name="de Groot A."/>
            <person name="Bitter W."/>
            <person name="Tommassen J."/>
        </authorList>
    </citation>
    <scope>PROTEIN SEQUENCE OF 26-35</scope>
    <scope>SUBCELLULAR LOCATION</scope>
    <scope>PROTEOLYTIC CLEAVAGE</scope>
    <source>
        <strain>PAO1 / PAO25</strain>
    </source>
</reference>
<reference key="5">
    <citation type="journal article" date="1998" name="Arch. Biochem. Biophys.">
        <title>Pseudomonas aeruginosa LasD processes the inactive LasA precursor to the active protease form.</title>
        <authorList>
            <person name="Park S."/>
            <person name="Galloway D.R."/>
        </authorList>
    </citation>
    <scope>INCORRECT FUNCTION</scope>
</reference>
<reference key="6">
    <citation type="journal article" date="2013" name="Langmuir">
        <title>Surface thermodynamic and adhesion force evaluation of the role of chitin-binding protein in the physical interaction between Pseudomonas aeruginosa and Candida albicans.</title>
        <authorList>
            <person name="Ovchinnikova E.S."/>
            <person name="Krom B.P."/>
            <person name="Harapanahalli A.K."/>
            <person name="Busscher H.J."/>
            <person name="van der Mei H.C."/>
        </authorList>
    </citation>
    <scope>DISRUPTION PHENOTYPE</scope>
</reference>
<feature type="signal peptide" evidence="4 5">
    <location>
        <begin position="1"/>
        <end position="25"/>
    </location>
</feature>
<feature type="chain" id="PRO_0000431398" description="Chitin-binding protein CbpD">
    <location>
        <begin position="26"/>
        <end position="389"/>
    </location>
</feature>
<feature type="domain" description="Chitin-binding type-4" evidence="1">
    <location>
        <begin position="26"/>
        <end position="208"/>
    </location>
</feature>
<feature type="sequence conflict" description="In Ref. 1; AAF12807." evidence="9" ref="1">
    <original>Q</original>
    <variation>R</variation>
    <location>
        <position position="305"/>
    </location>
</feature>
<feature type="strand" evidence="10">
    <location>
        <begin position="27"/>
        <end position="31"/>
    </location>
</feature>
<feature type="helix" evidence="10">
    <location>
        <begin position="35"/>
        <end position="42"/>
    </location>
</feature>
<feature type="helix" evidence="10">
    <location>
        <begin position="50"/>
        <end position="59"/>
    </location>
</feature>
<feature type="helix" evidence="10">
    <location>
        <begin position="62"/>
        <end position="65"/>
    </location>
</feature>
<feature type="helix" evidence="10">
    <location>
        <begin position="79"/>
        <end position="82"/>
    </location>
</feature>
<feature type="turn" evidence="10">
    <location>
        <begin position="88"/>
        <end position="92"/>
    </location>
</feature>
<feature type="helix" evidence="10">
    <location>
        <begin position="94"/>
        <end position="99"/>
    </location>
</feature>
<feature type="strand" evidence="10">
    <location>
        <begin position="117"/>
        <end position="127"/>
    </location>
</feature>
<feature type="strand" evidence="10">
    <location>
        <begin position="131"/>
        <end position="139"/>
    </location>
</feature>
<feature type="helix" evidence="10">
    <location>
        <begin position="151"/>
        <end position="153"/>
    </location>
</feature>
<feature type="strand" evidence="10">
    <location>
        <begin position="159"/>
        <end position="162"/>
    </location>
</feature>
<feature type="strand" evidence="10">
    <location>
        <begin position="167"/>
        <end position="177"/>
    </location>
</feature>
<feature type="strand" evidence="10">
    <location>
        <begin position="184"/>
        <end position="198"/>
    </location>
</feature>
<feature type="strand" evidence="10">
    <location>
        <begin position="200"/>
        <end position="209"/>
    </location>
</feature>
<feature type="strand" evidence="10">
    <location>
        <begin position="218"/>
        <end position="222"/>
    </location>
</feature>
<feature type="strand" evidence="10">
    <location>
        <begin position="234"/>
        <end position="240"/>
    </location>
</feature>
<feature type="strand" evidence="10">
    <location>
        <begin position="246"/>
        <end position="253"/>
    </location>
</feature>
<feature type="turn" evidence="10">
    <location>
        <begin position="261"/>
        <end position="263"/>
    </location>
</feature>
<feature type="helix" evidence="10">
    <location>
        <begin position="264"/>
        <end position="275"/>
    </location>
</feature>
<feature type="strand" evidence="10">
    <location>
        <begin position="277"/>
        <end position="284"/>
    </location>
</feature>
<feature type="strand" evidence="10">
    <location>
        <begin position="286"/>
        <end position="288"/>
    </location>
</feature>
<feature type="strand" evidence="10">
    <location>
        <begin position="300"/>
        <end position="307"/>
    </location>
</feature>
<feature type="strand" evidence="10">
    <location>
        <begin position="309"/>
        <end position="315"/>
    </location>
</feature>
<name>CBPD_PSEAE</name>
<sequence>MKHYSATLALLPLTLALFLPQAAHAHGSMETPPSRVYGCFLEGPENPKSAACKAAVAAGGTQALYDWNGVNQGNANGNHQAVVPDGQLCGAGKALFKGLNLARSDWPSTAIAPDASGNFQFVYKASAPHATRYFDFYITKDGYNPEKPLAWSDLEPAPFCSITSVKLENGTYRMNCPLPQGKTGKHVIYNVWQRSDSPEAFYACIDVSFSGAVANPWQALGNLRAQQDLPAGATVTLRLFDAQGRDAQRHSLTLAQGANGAKQWPLALAQKVNQDSTLVNIGVLDAYGAVSPVASSQDNQVYVRQAGYRFQVDIELPVEGGGEQPGGDGKVDFDYPQGLQQYDAGTVVRGADGKRYQCKPYPNSGWCKGWDLYYAPGKGMAWQDAWTLL</sequence>
<protein>
    <recommendedName>
        <fullName evidence="7">Chitin-binding protein CbpD</fullName>
    </recommendedName>
    <alternativeName>
        <fullName>Protease LasD</fullName>
    </alternativeName>
</protein>
<organism>
    <name type="scientific">Pseudomonas aeruginosa (strain ATCC 15692 / DSM 22644 / CIP 104116 / JCM 14847 / LMG 12228 / 1C / PRS 101 / PAO1)</name>
    <dbReference type="NCBI Taxonomy" id="208964"/>
    <lineage>
        <taxon>Bacteria</taxon>
        <taxon>Pseudomonadati</taxon>
        <taxon>Pseudomonadota</taxon>
        <taxon>Gammaproteobacteria</taxon>
        <taxon>Pseudomonadales</taxon>
        <taxon>Pseudomonadaceae</taxon>
        <taxon>Pseudomonas</taxon>
    </lineage>
</organism>